<feature type="chain" id="PRO_1000215938" description="Chromosome partition protein MukF">
    <location>
        <begin position="1"/>
        <end position="440"/>
    </location>
</feature>
<feature type="region of interest" description="Leucine-zipper">
    <location>
        <begin position="208"/>
        <end position="236"/>
    </location>
</feature>
<name>MUKF_ECOBW</name>
<protein>
    <recommendedName>
        <fullName evidence="1">Chromosome partition protein MukF</fullName>
    </recommendedName>
</protein>
<accession>C4ZQ48</accession>
<reference key="1">
    <citation type="journal article" date="2009" name="J. Bacteriol.">
        <title>Genomic sequencing reveals regulatory mutations and recombinational events in the widely used MC4100 lineage of Escherichia coli K-12.</title>
        <authorList>
            <person name="Ferenci T."/>
            <person name="Zhou Z."/>
            <person name="Betteridge T."/>
            <person name="Ren Y."/>
            <person name="Liu Y."/>
            <person name="Feng L."/>
            <person name="Reeves P.R."/>
            <person name="Wang L."/>
        </authorList>
    </citation>
    <scope>NUCLEOTIDE SEQUENCE [LARGE SCALE GENOMIC DNA]</scope>
    <source>
        <strain>K12 / MC4100 / BW2952</strain>
    </source>
</reference>
<keyword id="KW-0106">Calcium</keyword>
<keyword id="KW-0131">Cell cycle</keyword>
<keyword id="KW-0132">Cell division</keyword>
<keyword id="KW-0159">Chromosome partition</keyword>
<keyword id="KW-0963">Cytoplasm</keyword>
<keyword id="KW-0226">DNA condensation</keyword>
<comment type="function">
    <text evidence="1">Involved in chromosome condensation, segregation and cell cycle progression. May participate in facilitating chromosome segregation by condensation DNA from both sides of a centrally located replisome during cell division. Not required for mini-F plasmid partitioning. Probably acts via its interaction with MukB and MukE. Overexpression results in anucleate cells. It has a calcium binding activity.</text>
</comment>
<comment type="subunit">
    <text evidence="1">Interacts, and probably forms a ternary complex, with MukE and MukB via its C-terminal region. The complex formation is stimulated by calcium or magnesium. It is required for an interaction between MukE and MukB.</text>
</comment>
<comment type="subcellular location">
    <subcellularLocation>
        <location evidence="1">Cytoplasm</location>
        <location evidence="1">Nucleoid</location>
    </subcellularLocation>
    <text evidence="1">Restricted to the nucleoid region.</text>
</comment>
<comment type="similarity">
    <text evidence="1">Belongs to the MukF family.</text>
</comment>
<sequence>MSEFSQTVPELVAWARKNDFSISLPVDRLSFLLAVATLNGERLDGEMSEGELVDAFRHVSDAFEQTSETIGVRANNAINDMVRQRLLNRFTSEQAEGNAIYRLTPLGIGITDYYIRQREFSTLRLSMQLSIVAGELKRAADAAEEGGDEFHWHRNVYAPLKYSVAEIFDSIDLTQRLMDEQQQQVKDDIAQLLNKDWRAAISSCELLLSETSGTLRELQDTLEAAGDKLQANLLRIQDATMTHDDLHFVDRLVFDLQSKLDRIISWGQQSIDLWIGYDRHVHKFIRTAIDMDKNRVFAQRLRQSVQTYFDEPWALTYANADRLLDMRDEEMALRDEEVTGELPEDLEYEEFNEIREQLAAIIEEQLAVYKTRQVPLDLGLVVREYLSQYPRARHFDVARIVIDQAVRLGVAQADFTGLPAKWQPINDYGAKVQAHVIDKY</sequence>
<gene>
    <name evidence="1" type="primary">mukF</name>
    <name type="ordered locus">BWG_0774</name>
</gene>
<dbReference type="EMBL" id="CP001396">
    <property type="protein sequence ID" value="ACR63521.1"/>
    <property type="molecule type" value="Genomic_DNA"/>
</dbReference>
<dbReference type="RefSeq" id="WP_001288850.1">
    <property type="nucleotide sequence ID" value="NC_012759.1"/>
</dbReference>
<dbReference type="SMR" id="C4ZQ48"/>
<dbReference type="GeneID" id="93776493"/>
<dbReference type="KEGG" id="ebw:BWG_0774"/>
<dbReference type="HOGENOM" id="CLU_049853_0_0_6"/>
<dbReference type="GO" id="GO:0005737">
    <property type="term" value="C:cytoplasm"/>
    <property type="evidence" value="ECO:0007669"/>
    <property type="project" value="UniProtKB-UniRule"/>
</dbReference>
<dbReference type="GO" id="GO:0009295">
    <property type="term" value="C:nucleoid"/>
    <property type="evidence" value="ECO:0007669"/>
    <property type="project" value="UniProtKB-SubCell"/>
</dbReference>
<dbReference type="GO" id="GO:0005509">
    <property type="term" value="F:calcium ion binding"/>
    <property type="evidence" value="ECO:0007669"/>
    <property type="project" value="UniProtKB-UniRule"/>
</dbReference>
<dbReference type="GO" id="GO:0051301">
    <property type="term" value="P:cell division"/>
    <property type="evidence" value="ECO:0007669"/>
    <property type="project" value="UniProtKB-KW"/>
</dbReference>
<dbReference type="GO" id="GO:0030261">
    <property type="term" value="P:chromosome condensation"/>
    <property type="evidence" value="ECO:0007669"/>
    <property type="project" value="UniProtKB-KW"/>
</dbReference>
<dbReference type="GO" id="GO:0007059">
    <property type="term" value="P:chromosome segregation"/>
    <property type="evidence" value="ECO:0007669"/>
    <property type="project" value="UniProtKB-UniRule"/>
</dbReference>
<dbReference type="GO" id="GO:0006260">
    <property type="term" value="P:DNA replication"/>
    <property type="evidence" value="ECO:0007669"/>
    <property type="project" value="UniProtKB-UniRule"/>
</dbReference>
<dbReference type="CDD" id="cd16337">
    <property type="entry name" value="MukF_C"/>
    <property type="match status" value="1"/>
</dbReference>
<dbReference type="CDD" id="cd16335">
    <property type="entry name" value="MukF_N"/>
    <property type="match status" value="1"/>
</dbReference>
<dbReference type="Gene3D" id="1.20.58.590">
    <property type="entry name" value="Chromosome partition protein MukF, middle domain"/>
    <property type="match status" value="1"/>
</dbReference>
<dbReference type="Gene3D" id="1.10.225.40">
    <property type="entry name" value="MukF, C-terminal domain"/>
    <property type="match status" value="1"/>
</dbReference>
<dbReference type="Gene3D" id="1.10.10.10">
    <property type="entry name" value="Winged helix-like DNA-binding domain superfamily/Winged helix DNA-binding domain"/>
    <property type="match status" value="1"/>
</dbReference>
<dbReference type="HAMAP" id="MF_01803">
    <property type="entry name" value="MukF"/>
    <property type="match status" value="1"/>
</dbReference>
<dbReference type="InterPro" id="IPR005582">
    <property type="entry name" value="Chromosome_partition_MukF"/>
</dbReference>
<dbReference type="InterPro" id="IPR033441">
    <property type="entry name" value="MukF_C"/>
</dbReference>
<dbReference type="InterPro" id="IPR038198">
    <property type="entry name" value="MukF_C_sf"/>
</dbReference>
<dbReference type="InterPro" id="IPR033440">
    <property type="entry name" value="MukF_M"/>
</dbReference>
<dbReference type="InterPro" id="IPR036141">
    <property type="entry name" value="MukF_M_sp"/>
</dbReference>
<dbReference type="InterPro" id="IPR033439">
    <property type="entry name" value="MukF_WHTH"/>
</dbReference>
<dbReference type="InterPro" id="IPR036388">
    <property type="entry name" value="WH-like_DNA-bd_sf"/>
</dbReference>
<dbReference type="InterPro" id="IPR036390">
    <property type="entry name" value="WH_DNA-bd_sf"/>
</dbReference>
<dbReference type="NCBIfam" id="NF003615">
    <property type="entry name" value="PRK05260.1"/>
    <property type="match status" value="1"/>
</dbReference>
<dbReference type="Pfam" id="PF03882">
    <property type="entry name" value="KicB"/>
    <property type="match status" value="1"/>
</dbReference>
<dbReference type="Pfam" id="PF17193">
    <property type="entry name" value="MukF_C"/>
    <property type="match status" value="1"/>
</dbReference>
<dbReference type="Pfam" id="PF17192">
    <property type="entry name" value="MukF_M"/>
    <property type="match status" value="1"/>
</dbReference>
<dbReference type="PIRSF" id="PIRSF018282">
    <property type="entry name" value="MukF"/>
    <property type="match status" value="1"/>
</dbReference>
<dbReference type="SUPFAM" id="SSF140570">
    <property type="entry name" value="MukF C-terminal domain-like"/>
    <property type="match status" value="1"/>
</dbReference>
<dbReference type="SUPFAM" id="SSF46785">
    <property type="entry name" value="Winged helix' DNA-binding domain"/>
    <property type="match status" value="1"/>
</dbReference>
<proteinExistence type="inferred from homology"/>
<organism>
    <name type="scientific">Escherichia coli (strain K12 / MC4100 / BW2952)</name>
    <dbReference type="NCBI Taxonomy" id="595496"/>
    <lineage>
        <taxon>Bacteria</taxon>
        <taxon>Pseudomonadati</taxon>
        <taxon>Pseudomonadota</taxon>
        <taxon>Gammaproteobacteria</taxon>
        <taxon>Enterobacterales</taxon>
        <taxon>Enterobacteriaceae</taxon>
        <taxon>Escherichia</taxon>
    </lineage>
</organism>
<evidence type="ECO:0000255" key="1">
    <source>
        <dbReference type="HAMAP-Rule" id="MF_01803"/>
    </source>
</evidence>